<feature type="chain" id="PRO_0000327669" description="Probable E3 ubiquitin-protein ligase bre1">
    <location>
        <begin position="1"/>
        <end position="1080"/>
    </location>
</feature>
<feature type="zinc finger region" description="RING-type" evidence="3">
    <location>
        <begin position="1028"/>
        <end position="1067"/>
    </location>
</feature>
<feature type="region of interest" description="Disordered" evidence="4">
    <location>
        <begin position="1"/>
        <end position="37"/>
    </location>
</feature>
<feature type="region of interest" description="Disordered" evidence="4">
    <location>
        <begin position="274"/>
        <end position="335"/>
    </location>
</feature>
<feature type="region of interest" description="Disordered" evidence="4">
    <location>
        <begin position="721"/>
        <end position="742"/>
    </location>
</feature>
<feature type="region of interest" description="Disordered" evidence="4">
    <location>
        <begin position="991"/>
        <end position="1016"/>
    </location>
</feature>
<feature type="coiled-coil region" evidence="2">
    <location>
        <begin position="50"/>
        <end position="91"/>
    </location>
</feature>
<feature type="coiled-coil region" evidence="2">
    <location>
        <begin position="149"/>
        <end position="169"/>
    </location>
</feature>
<feature type="coiled-coil region" evidence="2">
    <location>
        <begin position="196"/>
        <end position="269"/>
    </location>
</feature>
<feature type="coiled-coil region" evidence="2">
    <location>
        <begin position="331"/>
        <end position="1003"/>
    </location>
</feature>
<feature type="compositionally biased region" description="Basic and acidic residues" evidence="4">
    <location>
        <begin position="1"/>
        <end position="21"/>
    </location>
</feature>
<feature type="compositionally biased region" description="Low complexity" evidence="4">
    <location>
        <begin position="25"/>
        <end position="34"/>
    </location>
</feature>
<feature type="compositionally biased region" description="Low complexity" evidence="4">
    <location>
        <begin position="284"/>
        <end position="312"/>
    </location>
</feature>
<feature type="compositionally biased region" description="Low complexity" evidence="4">
    <location>
        <begin position="319"/>
        <end position="330"/>
    </location>
</feature>
<feature type="compositionally biased region" description="Low complexity" evidence="4">
    <location>
        <begin position="994"/>
        <end position="1014"/>
    </location>
</feature>
<dbReference type="EC" id="2.3.2.27" evidence="5"/>
<dbReference type="EMBL" id="AAFI02000012">
    <property type="protein sequence ID" value="EAL70013.1"/>
    <property type="molecule type" value="Genomic_DNA"/>
</dbReference>
<dbReference type="RefSeq" id="XP_644058.1">
    <property type="nucleotide sequence ID" value="XM_638966.1"/>
</dbReference>
<dbReference type="SMR" id="Q86KL1"/>
<dbReference type="FunCoup" id="Q86KL1">
    <property type="interactions" value="442"/>
</dbReference>
<dbReference type="STRING" id="44689.Q86KL1"/>
<dbReference type="PaxDb" id="44689-DDB0237665"/>
<dbReference type="EnsemblProtists" id="EAL70013">
    <property type="protein sequence ID" value="EAL70013"/>
    <property type="gene ID" value="DDB_G0274241"/>
</dbReference>
<dbReference type="GeneID" id="8619487"/>
<dbReference type="KEGG" id="ddi:DDB_G0274241"/>
<dbReference type="dictyBase" id="DDB_G0274241">
    <property type="gene designation" value="bre1"/>
</dbReference>
<dbReference type="VEuPathDB" id="AmoebaDB:DDB_G0274241"/>
<dbReference type="eggNOG" id="KOG0978">
    <property type="taxonomic scope" value="Eukaryota"/>
</dbReference>
<dbReference type="HOGENOM" id="CLU_286274_0_0_1"/>
<dbReference type="InParanoid" id="Q86KL1"/>
<dbReference type="OMA" id="YSNIDTR"/>
<dbReference type="Reactome" id="R-DDI-9013422">
    <property type="pathway name" value="RHOBTB1 GTPase cycle"/>
</dbReference>
<dbReference type="UniPathway" id="UPA00143"/>
<dbReference type="PRO" id="PR:Q86KL1"/>
<dbReference type="Proteomes" id="UP000002195">
    <property type="component" value="Chromosome 2"/>
</dbReference>
<dbReference type="GO" id="GO:0033503">
    <property type="term" value="C:HULC complex"/>
    <property type="evidence" value="ECO:0000318"/>
    <property type="project" value="GO_Central"/>
</dbReference>
<dbReference type="GO" id="GO:0005634">
    <property type="term" value="C:nucleus"/>
    <property type="evidence" value="ECO:0000318"/>
    <property type="project" value="GO_Central"/>
</dbReference>
<dbReference type="GO" id="GO:0061630">
    <property type="term" value="F:ubiquitin protein ligase activity"/>
    <property type="evidence" value="ECO:0000318"/>
    <property type="project" value="GO_Central"/>
</dbReference>
<dbReference type="GO" id="GO:0008270">
    <property type="term" value="F:zinc ion binding"/>
    <property type="evidence" value="ECO:0007669"/>
    <property type="project" value="UniProtKB-KW"/>
</dbReference>
<dbReference type="GO" id="GO:0006325">
    <property type="term" value="P:chromatin organization"/>
    <property type="evidence" value="ECO:0007669"/>
    <property type="project" value="UniProtKB-KW"/>
</dbReference>
<dbReference type="GO" id="GO:0016567">
    <property type="term" value="P:protein ubiquitination"/>
    <property type="evidence" value="ECO:0007669"/>
    <property type="project" value="UniProtKB-UniPathway"/>
</dbReference>
<dbReference type="CDD" id="cd16499">
    <property type="entry name" value="RING-HC_Bre1-like"/>
    <property type="match status" value="1"/>
</dbReference>
<dbReference type="Gene3D" id="3.30.40.10">
    <property type="entry name" value="Zinc/RING finger domain, C3HC4 (zinc finger)"/>
    <property type="match status" value="1"/>
</dbReference>
<dbReference type="InterPro" id="IPR013956">
    <property type="entry name" value="E3_ubiquit_lig_Bre1"/>
</dbReference>
<dbReference type="InterPro" id="IPR001841">
    <property type="entry name" value="Znf_RING"/>
</dbReference>
<dbReference type="InterPro" id="IPR013083">
    <property type="entry name" value="Znf_RING/FYVE/PHD"/>
</dbReference>
<dbReference type="InterPro" id="IPR017907">
    <property type="entry name" value="Znf_RING_CS"/>
</dbReference>
<dbReference type="PANTHER" id="PTHR23163:SF0">
    <property type="entry name" value="E3 UBIQUITIN-PROTEIN LIGASE BRE1"/>
    <property type="match status" value="1"/>
</dbReference>
<dbReference type="PANTHER" id="PTHR23163">
    <property type="entry name" value="RING FINGER PROTEIN-RELATED"/>
    <property type="match status" value="1"/>
</dbReference>
<dbReference type="Pfam" id="PF13923">
    <property type="entry name" value="zf-C3HC4_2"/>
    <property type="match status" value="1"/>
</dbReference>
<dbReference type="SMART" id="SM00184">
    <property type="entry name" value="RING"/>
    <property type="match status" value="1"/>
</dbReference>
<dbReference type="SUPFAM" id="SSF81995">
    <property type="entry name" value="beta-sandwich domain of Sec23/24"/>
    <property type="match status" value="1"/>
</dbReference>
<dbReference type="SUPFAM" id="SSF57850">
    <property type="entry name" value="RING/U-box"/>
    <property type="match status" value="1"/>
</dbReference>
<dbReference type="PROSITE" id="PS00518">
    <property type="entry name" value="ZF_RING_1"/>
    <property type="match status" value="1"/>
</dbReference>
<dbReference type="PROSITE" id="PS50089">
    <property type="entry name" value="ZF_RING_2"/>
    <property type="match status" value="1"/>
</dbReference>
<proteinExistence type="inferred from homology"/>
<sequence>MSMDHQDLKRRDPPADSESQRPSKKISLSSSEASVPIGGPPIDQNLILFQNRAMKVRVEEQKIEINDREQKIKQLNTKIHQYKENISCLCRVWDQLNSGLDLLINRVDFENAMDNLLPKDNITESFEFLSSYITEPVTLDEKYTLDQSLQKKVQKTQSTFSKISKALEKEHTLSKFVFRLLKSKDGIKSNDIEKLLKEDNDKLSKQNQYIQNIYDKVQIQFKQLTDQTTHLADQAAIYQQNNKELKLELEKSQDELTIERKRVIKLQDETLRTPQVKIPSPSLGSNIPGGANNNNNNNNNSNNNNNINNNGNNMGGSGSSSLASSTNGINKQQSNDINGKELTHEELIAELQRQSDSRLLEARKLREEKAILLKELQQIQIDIRVIPEERIQNSMPYQVLRQRYQLVSDELDIHRNQCTKLQNDLAQATIGRRLEREALEAFEAHRRQNIERRVSQLEVESIELKGEKEKLVCLIEQRNPNVPSLQYIQESRLLLDKKDDEIKQLRKEIEQLKLDIEKYKAPKEEIERYKLLVQRDVESKNIEINKLLEKINTITKQNNDLKSNEQQLLQKESELTLSLNILKSNKNNININNLDKDNIEDNSKIKQQQEQQQQQHQKIDNNNKKEEEIKKEQQQQQQQQQQQQQQQQQQQQQQQQQQQQQQQQQQQQQQQQQQQQQQQEEQKKDKEMIDIEKSTENIINNNNNNNTNEQKLNEINKNIENGNNENNNNNENTINNENTINNNNNENKDKIIFNLELNESKLKLELSTVKKQLEDITKSKEEYDNEIKEINEKFKAQIKELDITISQNKIQQESQKQELEALVMEIDSMGKAYEQMLEQNTRLTKQLSDKEDTHAHLMAENIKSQQTIRNSKEIQLAIEEKLNRNEEKLKSQGELMQKIEEKSNILQKQLSKVTEDLHSCSFDLEKHKRFVRENNAHSLELKTQLDHLSNLNAELKKKADDSIFALEREIDKAKRLDEEKQLLKKKLEKATSANNNNNNNNNNNNNNNNNNSSSSEEELKLINQRLRCTICNDRQKNYVIAKCFHVFCKECIYSNIDTRKRRCPSCNRAFAETDVHQIYY</sequence>
<gene>
    <name type="primary">bre1</name>
    <name type="ORF">DDB_G0274241</name>
</gene>
<accession>Q86KL1</accession>
<accession>Q555K8</accession>
<protein>
    <recommendedName>
        <fullName>Probable E3 ubiquitin-protein ligase bre1</fullName>
        <ecNumber evidence="5">2.3.2.27</ecNumber>
    </recommendedName>
    <alternativeName>
        <fullName evidence="5">RING-type E3 ubiquitin transferase bre1</fullName>
    </alternativeName>
</protein>
<reference key="1">
    <citation type="journal article" date="2002" name="Nature">
        <title>Sequence and analysis of chromosome 2 of Dictyostelium discoideum.</title>
        <authorList>
            <person name="Gloeckner G."/>
            <person name="Eichinger L."/>
            <person name="Szafranski K."/>
            <person name="Pachebat J.A."/>
            <person name="Bankier A.T."/>
            <person name="Dear P.H."/>
            <person name="Lehmann R."/>
            <person name="Baumgart C."/>
            <person name="Parra G."/>
            <person name="Abril J.F."/>
            <person name="Guigo R."/>
            <person name="Kumpf K."/>
            <person name="Tunggal B."/>
            <person name="Cox E.C."/>
            <person name="Quail M.A."/>
            <person name="Platzer M."/>
            <person name="Rosenthal A."/>
            <person name="Noegel A.A."/>
        </authorList>
    </citation>
    <scope>NUCLEOTIDE SEQUENCE [LARGE SCALE GENOMIC DNA]</scope>
    <source>
        <strain>AX4</strain>
    </source>
</reference>
<reference key="2">
    <citation type="journal article" date="2005" name="Nature">
        <title>The genome of the social amoeba Dictyostelium discoideum.</title>
        <authorList>
            <person name="Eichinger L."/>
            <person name="Pachebat J.A."/>
            <person name="Gloeckner G."/>
            <person name="Rajandream M.A."/>
            <person name="Sucgang R."/>
            <person name="Berriman M."/>
            <person name="Song J."/>
            <person name="Olsen R."/>
            <person name="Szafranski K."/>
            <person name="Xu Q."/>
            <person name="Tunggal B."/>
            <person name="Kummerfeld S."/>
            <person name="Madera M."/>
            <person name="Konfortov B.A."/>
            <person name="Rivero F."/>
            <person name="Bankier A.T."/>
            <person name="Lehmann R."/>
            <person name="Hamlin N."/>
            <person name="Davies R."/>
            <person name="Gaudet P."/>
            <person name="Fey P."/>
            <person name="Pilcher K."/>
            <person name="Chen G."/>
            <person name="Saunders D."/>
            <person name="Sodergren E.J."/>
            <person name="Davis P."/>
            <person name="Kerhornou A."/>
            <person name="Nie X."/>
            <person name="Hall N."/>
            <person name="Anjard C."/>
            <person name="Hemphill L."/>
            <person name="Bason N."/>
            <person name="Farbrother P."/>
            <person name="Desany B."/>
            <person name="Just E."/>
            <person name="Morio T."/>
            <person name="Rost R."/>
            <person name="Churcher C.M."/>
            <person name="Cooper J."/>
            <person name="Haydock S."/>
            <person name="van Driessche N."/>
            <person name="Cronin A."/>
            <person name="Goodhead I."/>
            <person name="Muzny D.M."/>
            <person name="Mourier T."/>
            <person name="Pain A."/>
            <person name="Lu M."/>
            <person name="Harper D."/>
            <person name="Lindsay R."/>
            <person name="Hauser H."/>
            <person name="James K.D."/>
            <person name="Quiles M."/>
            <person name="Madan Babu M."/>
            <person name="Saito T."/>
            <person name="Buchrieser C."/>
            <person name="Wardroper A."/>
            <person name="Felder M."/>
            <person name="Thangavelu M."/>
            <person name="Johnson D."/>
            <person name="Knights A."/>
            <person name="Loulseged H."/>
            <person name="Mungall K.L."/>
            <person name="Oliver K."/>
            <person name="Price C."/>
            <person name="Quail M.A."/>
            <person name="Urushihara H."/>
            <person name="Hernandez J."/>
            <person name="Rabbinowitsch E."/>
            <person name="Steffen D."/>
            <person name="Sanders M."/>
            <person name="Ma J."/>
            <person name="Kohara Y."/>
            <person name="Sharp S."/>
            <person name="Simmonds M.N."/>
            <person name="Spiegler S."/>
            <person name="Tivey A."/>
            <person name="Sugano S."/>
            <person name="White B."/>
            <person name="Walker D."/>
            <person name="Woodward J.R."/>
            <person name="Winckler T."/>
            <person name="Tanaka Y."/>
            <person name="Shaulsky G."/>
            <person name="Schleicher M."/>
            <person name="Weinstock G.M."/>
            <person name="Rosenthal A."/>
            <person name="Cox E.C."/>
            <person name="Chisholm R.L."/>
            <person name="Gibbs R.A."/>
            <person name="Loomis W.F."/>
            <person name="Platzer M."/>
            <person name="Kay R.R."/>
            <person name="Williams J.G."/>
            <person name="Dear P.H."/>
            <person name="Noegel A.A."/>
            <person name="Barrell B.G."/>
            <person name="Kuspa A."/>
        </authorList>
    </citation>
    <scope>NUCLEOTIDE SEQUENCE [LARGE SCALE GENOMIC DNA]</scope>
    <source>
        <strain>AX4</strain>
    </source>
</reference>
<organism>
    <name type="scientific">Dictyostelium discoideum</name>
    <name type="common">Social amoeba</name>
    <dbReference type="NCBI Taxonomy" id="44689"/>
    <lineage>
        <taxon>Eukaryota</taxon>
        <taxon>Amoebozoa</taxon>
        <taxon>Evosea</taxon>
        <taxon>Eumycetozoa</taxon>
        <taxon>Dictyostelia</taxon>
        <taxon>Dictyosteliales</taxon>
        <taxon>Dictyosteliaceae</taxon>
        <taxon>Dictyostelium</taxon>
    </lineage>
</organism>
<keyword id="KW-0156">Chromatin regulator</keyword>
<keyword id="KW-0175">Coiled coil</keyword>
<keyword id="KW-0479">Metal-binding</keyword>
<keyword id="KW-0539">Nucleus</keyword>
<keyword id="KW-1185">Reference proteome</keyword>
<keyword id="KW-0808">Transferase</keyword>
<keyword id="KW-0833">Ubl conjugation pathway</keyword>
<keyword id="KW-0862">Zinc</keyword>
<keyword id="KW-0863">Zinc-finger</keyword>
<comment type="function">
    <text evidence="1">E3 ubiquitin-protein ligase that mediates monoubiquitination of histone H2B.</text>
</comment>
<comment type="catalytic activity">
    <reaction evidence="5">
        <text>S-ubiquitinyl-[E2 ubiquitin-conjugating enzyme]-L-cysteine + [acceptor protein]-L-lysine = [E2 ubiquitin-conjugating enzyme]-L-cysteine + N(6)-ubiquitinyl-[acceptor protein]-L-lysine.</text>
        <dbReference type="EC" id="2.3.2.27"/>
    </reaction>
</comment>
<comment type="pathway">
    <text>Protein modification; protein ubiquitination.</text>
</comment>
<comment type="subcellular location">
    <subcellularLocation>
        <location evidence="1">Nucleus</location>
    </subcellularLocation>
</comment>
<comment type="similarity">
    <text evidence="5">Belongs to the BRE1 family.</text>
</comment>
<name>BRE1_DICDI</name>
<evidence type="ECO:0000250" key="1"/>
<evidence type="ECO:0000255" key="2"/>
<evidence type="ECO:0000255" key="3">
    <source>
        <dbReference type="PROSITE-ProRule" id="PRU00175"/>
    </source>
</evidence>
<evidence type="ECO:0000256" key="4">
    <source>
        <dbReference type="SAM" id="MobiDB-lite"/>
    </source>
</evidence>
<evidence type="ECO:0000305" key="5"/>